<gene>
    <name evidence="12" type="primary">TM</name>
</gene>
<proteinExistence type="evidence at protein level"/>
<feature type="chain" id="PRO_0000447721" description="Tropomyosin Tod p 1.0102">
    <location>
        <begin position="1"/>
        <end position="284"/>
    </location>
</feature>
<feature type="region of interest" description="Disordered" evidence="4">
    <location>
        <begin position="103"/>
        <end position="136"/>
    </location>
</feature>
<feature type="coiled-coil region" evidence="3">
    <location>
        <begin position="15"/>
        <end position="273"/>
    </location>
</feature>
<sequence length="284" mass="32673">MDAIKKKMLAMKMEKEVATDKAEQTEQSLRDLEAAKNTIEEDLSTLQKKYSNLENDFDNAKENLTVANTNLEASEKRVNECESEIQGLNRRIQLLEEDLERSEERLTSAQSKLEDASKAADESERGRKVLENRSQGDEERIDLLEKQLEEAKWIAEDADRKFDEAARKLAITEVDLERAEARLEAAEAKIVELEEELKVVGNNMKSLEISEQEASQREDSYEETIRDLTHRLKEAENRAAEAERTVSKLQKEVDRLEDELLAEKERYKSISDELDQTFAELAGY</sequence>
<organism evidence="14">
    <name type="scientific">Todarodes pacificus</name>
    <name type="common">Japanese flying squid</name>
    <name type="synonym">Ommastrephes pacificus</name>
    <dbReference type="NCBI Taxonomy" id="6637"/>
    <lineage>
        <taxon>Eukaryota</taxon>
        <taxon>Metazoa</taxon>
        <taxon>Spiralia</taxon>
        <taxon>Lophotrochozoa</taxon>
        <taxon>Mollusca</taxon>
        <taxon>Cephalopoda</taxon>
        <taxon>Coleoidea</taxon>
        <taxon>Decapodiformes</taxon>
        <taxon>Oegopsida</taxon>
        <taxon>Ommastrephidae</taxon>
        <taxon>Todarodes</taxon>
    </lineage>
</organism>
<evidence type="ECO:0000250" key="1">
    <source>
        <dbReference type="UniProtKB" id="A2V735"/>
    </source>
</evidence>
<evidence type="ECO:0000250" key="2">
    <source>
        <dbReference type="UniProtKB" id="Q22866"/>
    </source>
</evidence>
<evidence type="ECO:0000255" key="3"/>
<evidence type="ECO:0000256" key="4">
    <source>
        <dbReference type="SAM" id="MobiDB-lite"/>
    </source>
</evidence>
<evidence type="ECO:0000269" key="5">
    <source>
    </source>
</evidence>
<evidence type="ECO:0000269" key="6">
    <source>
    </source>
</evidence>
<evidence type="ECO:0000269" key="7">
    <source>
    </source>
</evidence>
<evidence type="ECO:0000269" key="8">
    <source>
    </source>
</evidence>
<evidence type="ECO:0000303" key="9">
    <source>
    </source>
</evidence>
<evidence type="ECO:0000303" key="10">
    <source>
    </source>
</evidence>
<evidence type="ECO:0000303" key="11">
    <source>
    </source>
</evidence>
<evidence type="ECO:0000305" key="12"/>
<evidence type="ECO:0000305" key="13">
    <source>
    </source>
</evidence>
<evidence type="ECO:0000312" key="14">
    <source>
        <dbReference type="EMBL" id="BAE54431.1"/>
    </source>
</evidence>
<comment type="function">
    <text evidence="2">Tropomyosin, in association with the troponin complex, plays a central role in the calcium dependent regulation of muscle contraction.</text>
</comment>
<comment type="subunit">
    <text evidence="1">Homodimer.</text>
</comment>
<comment type="tissue specificity">
    <text evidence="5 6 7">Expressed in mantle muscle (at protein level).</text>
</comment>
<comment type="domain">
    <text evidence="12">The molecule is in a coiled coil structure that is formed by 2 polypeptide chains. The sequence exhibits a prominent seven-residues periodicity.</text>
</comment>
<comment type="PTM">
    <text evidence="8">The N-terminus is blocked.</text>
</comment>
<comment type="allergen">
    <text evidence="5 6 7 8">Causes an allergic reaction in human (PubMed:16904802, PubMed:17147442, PubMed:25530105, PubMed:8939158). Binds to IgE of patients allergic to crustaceans (shrimp and crab) (PubMed:16904802). Binds to IgE of patients residing in Japan and China allergic to squid (PubMed:17147442, PubMed:25530105, PubMed:8939158). Binds to IgE of American patients allergic to shrimp (PubMed:8939158). The allergenicity of this protein is reduced significantly by its reaction of lysines with ribose during the Maillard reaction (glycation), and to a lesser extent by digestion with pepsin. On the other hand, modification of the lysine residues in this protein using 2,4,6-trinitrobenzenesulfonic acid (TNBS) has no effect on allergenicity (PubMed:17147442). Treatment by high hydrostatic pressure (HHP) reduces allergenicity (400 and 600 MPa more effectively than 200 MPa) (PubMed:25530105).</text>
</comment>
<comment type="biotechnology">
    <text evidence="13">The reaction of this protein with ribose in the Maillard reaction may be useful in development of processed seafood with low allergenicity.</text>
</comment>
<comment type="similarity">
    <text evidence="12">Belongs to the tropomyosin family.</text>
</comment>
<reference evidence="14" key="1">
    <citation type="journal article" date="2006" name="Food Chem. Toxicol.">
        <title>Cephalopod tropomyosins: identification as major allergens and molecular cloning.</title>
        <authorList>
            <person name="Motoyama K."/>
            <person name="Ishizaki S."/>
            <person name="Nagashima Y."/>
            <person name="Shiomi K."/>
        </authorList>
    </citation>
    <scope>NUCLEOTIDE SEQUENCE [MRNA]</scope>
    <scope>TISSUE SPECIFICITY</scope>
    <scope>ALLERGEN</scope>
    <source>
        <tissue evidence="9">Mantle muscle</tissue>
    </source>
</reference>
<reference key="2">
    <citation type="journal article" date="1996" name="J. Allergy Clin. Immunol.">
        <title>Identification of the first major allergen of a squid (Todarodes pacificus).</title>
        <authorList>
            <person name="Miyazawa H."/>
            <person name="Fukamachi H."/>
            <person name="Inagaki Y."/>
            <person name="Reese G."/>
            <person name="Daul C.B."/>
            <person name="Lehrer S.B."/>
            <person name="Inouye S."/>
            <person name="Sakaguchi M."/>
        </authorList>
    </citation>
    <scope>PROTEIN SEQUENCE OF 37-48; 50-76; 129-146 AND 252-264</scope>
    <scope>PTM</scope>
    <scope>ALLERGEN</scope>
</reference>
<reference key="3">
    <citation type="journal article" date="2006" name="J. Agric. Food Chem.">
        <title>Changes in allergenicity and digestibility of squid tropomyosin during the Maillard reaction with ribose.</title>
        <authorList>
            <person name="Nakamura A."/>
            <person name="Sasaki F."/>
            <person name="Watanabe K."/>
            <person name="Ojima T."/>
            <person name="Ahn D.H."/>
            <person name="Saeki H."/>
        </authorList>
    </citation>
    <scope>TISSUE SPECIFICITY</scope>
    <scope>ALLERGEN</scope>
    <scope>BIOTECHNOLOGY</scope>
    <scope>CIRCULAR DICHROISM ANALYSIS</scope>
</reference>
<reference key="4">
    <citation type="journal article" date="2015" name="Food Chem. Toxicol.">
        <title>Allergenic response to squid (Todarodes pacificus) tropomyosin Tod p1 structure modifications induced by high hydrostatic pressure.</title>
        <authorList>
            <person name="Jin Y."/>
            <person name="Deng Y."/>
            <person name="Qian B."/>
            <person name="Zhang Y."/>
            <person name="Liu Z."/>
            <person name="Zhao Y."/>
        </authorList>
    </citation>
    <scope>TISSUE SPECIFICITY</scope>
    <scope>ALLERGEN</scope>
    <scope>CIRCULAR DICHROISM ANALYSIS</scope>
</reference>
<accession>Q2V0V2</accession>
<name>TPM_TODPA</name>
<protein>
    <recommendedName>
        <fullName evidence="12">Tropomyosin Tod p 1.0102</fullName>
    </recommendedName>
    <alternativeName>
        <fullName evidence="11">Allergen Tod p 1</fullName>
    </alternativeName>
    <alternativeName>
        <fullName evidence="12">Allergen Tod p 1.0101</fullName>
    </alternativeName>
    <alternativeName>
        <fullName evidence="10">Tropomyosin Tod p 1</fullName>
        <shortName evidence="10">TMTp1</shortName>
    </alternativeName>
    <allergenName evidence="12">Tod p 1.0102</allergenName>
</protein>
<dbReference type="EMBL" id="AB218915">
    <property type="protein sequence ID" value="BAE54431.1"/>
    <property type="molecule type" value="mRNA"/>
</dbReference>
<dbReference type="SMR" id="Q2V0V2"/>
<dbReference type="Allergome" id="4099">
    <property type="allergen name" value="Tod p 1.0102"/>
</dbReference>
<dbReference type="Allergome" id="649">
    <property type="allergen name" value="Tod p 1"/>
</dbReference>
<dbReference type="GO" id="GO:0042803">
    <property type="term" value="F:protein homodimerization activity"/>
    <property type="evidence" value="ECO:0000250"/>
    <property type="project" value="UniProtKB"/>
</dbReference>
<dbReference type="GO" id="GO:0006937">
    <property type="term" value="P:regulation of muscle contraction"/>
    <property type="evidence" value="ECO:0000250"/>
    <property type="project" value="UniProtKB"/>
</dbReference>
<dbReference type="FunFam" id="1.20.5.170:FF:000005">
    <property type="entry name" value="Tropomyosin alpha-1 chain"/>
    <property type="match status" value="1"/>
</dbReference>
<dbReference type="FunFam" id="1.20.5.170:FF:000001">
    <property type="entry name" value="Tropomyosin alpha-1 chain isoform 1"/>
    <property type="match status" value="1"/>
</dbReference>
<dbReference type="FunFam" id="1.20.5.340:FF:000001">
    <property type="entry name" value="Tropomyosin alpha-1 chain isoform 2"/>
    <property type="match status" value="1"/>
</dbReference>
<dbReference type="Gene3D" id="1.20.5.170">
    <property type="match status" value="2"/>
</dbReference>
<dbReference type="Gene3D" id="1.20.5.340">
    <property type="match status" value="1"/>
</dbReference>
<dbReference type="InterPro" id="IPR000533">
    <property type="entry name" value="Tropomyosin"/>
</dbReference>
<dbReference type="PANTHER" id="PTHR19269">
    <property type="entry name" value="TROPOMYOSIN"/>
    <property type="match status" value="1"/>
</dbReference>
<dbReference type="Pfam" id="PF00261">
    <property type="entry name" value="Tropomyosin"/>
    <property type="match status" value="1"/>
</dbReference>
<dbReference type="PRINTS" id="PR00194">
    <property type="entry name" value="TROPOMYOSIN"/>
</dbReference>
<dbReference type="SUPFAM" id="SSF57997">
    <property type="entry name" value="Tropomyosin"/>
    <property type="match status" value="1"/>
</dbReference>
<keyword id="KW-0020">Allergen</keyword>
<keyword id="KW-0175">Coiled coil</keyword>
<keyword id="KW-0903">Direct protein sequencing</keyword>
<keyword id="KW-0514">Muscle protein</keyword>
<keyword id="KW-0677">Repeat</keyword>